<protein>
    <recommendedName>
        <fullName>RNA-directed RNA polymerase L</fullName>
        <shortName>Protein L</shortName>
    </recommendedName>
    <alternativeName>
        <fullName>Large structural protein</fullName>
    </alternativeName>
    <alternativeName>
        <fullName>Replicase</fullName>
    </alternativeName>
    <alternativeName>
        <fullName>Transcriptase</fullName>
    </alternativeName>
    <domain>
        <recommendedName>
            <fullName>RNA-directed RNA polymerase</fullName>
            <ecNumber evidence="2">2.7.7.48</ecNumber>
        </recommendedName>
    </domain>
    <domain>
        <recommendedName>
            <fullName evidence="1">GTP phosphohydrolase</fullName>
            <ecNumber evidence="1">3.6.1.-</ecNumber>
        </recommendedName>
    </domain>
    <domain>
        <recommendedName>
            <fullName evidence="5">GDP polyribonucleotidyltransferase</fullName>
            <ecNumber evidence="1">2.7.7.88</ecNumber>
        </recommendedName>
        <alternativeName>
            <fullName evidence="5">PRNTase</fullName>
        </alternativeName>
    </domain>
    <domain>
        <recommendedName>
            <fullName evidence="5">mRNA cap methyltransferase</fullName>
            <ecNumber evidence="1">2.1.1.375</ecNumber>
        </recommendedName>
        <alternativeName>
            <fullName evidence="1">mRNA (guanine-N(7)-)-methyltransferase</fullName>
            <shortName evidence="1">G-N7-MTase</shortName>
        </alternativeName>
        <alternativeName>
            <fullName evidence="1">mRNA (nucleoside-2'-O-)-methyltransferase</fullName>
            <shortName evidence="1">N1-2'-O-MTase</shortName>
        </alternativeName>
    </domain>
</protein>
<sequence>MIDSTEVYDDPVDPVEPEADLRSNSVVPNILRNSDYNLNSPLLEDPSRLMIEWLTTGNRPSRLNLTDNLLRSYKVLRGYFKKLDVGSMRAGGLGAQAMITLWLHGSHSESTRSRKCLTELSQFYKKSSPIEKLLNYTLENRGLKTPTEGVLSSINKVQYDQAFGRYLGNTYSSYLFFHVIILYMNALDWDEEKTILALWKEIASIDVKSDLVKFRDQIWGSLVITKDFVYSQSANCLFDRNYTLMLKDLFLSRFNSLLILISPPESRYSDDLVSNLCQLYIAGDKVLSACGNSGYDVIKLLEPYIVNKLVQKAEKFRPLIHSLGDFPQFIRDKTNQLEGTFGPSAREFFQTMDLLDNIHDLVFVYGCYRHWGHPYIDYRKGLSKLYDQVHVKKIIDRNYQECLASDLAKRILRWGFDKYSRWYLDSNLLPGDHPLSPYVKTQTWPPKHVVDMVGDTWHSLPITQIFEIPESMDPSEILDDKSHSFTRTRLASWLSENRGGPVPSEKVIITALSRPPVNPREFLRSIDVGGLPDDDLIIGLKPKERELKIEGRFFALMSWNLRLYFVITEKLLATYILPLFDALTMTDNLNKVFKKLIDRVTGQGLLDYSRVTYAFHLDYEKWNNHQRLESTKDVFSVLDKVFGLKKVFSRTHEFFQKSWVYYSDRSDLIGLWRDQIYCLDMTNGPTCWNGQDGGLEGLRQKGWSLVSLLMIDRESQTRNTRTKILAQGDNQVLCPTYMLSSGLNKEGLLYELDSISRNAISIYRAIEDGASKLGLIIKKEETMCSYDFLIYGKTPLFRGNILVPESKRWARVSCISNDQIVNLANIMSTVSTNALTVAQHSQSLIKPMRDFLLMSVQAVYHYLLFSPILKDRVYKILVADGTEFLLAMSRIIYLDPSLGGVSGMSLGRFHIRQFSDPVSEGLSFWREIWLSSSESWIHALCQEAGNPDLGDRSLESFTRLLEDPTTLNIRGGASPTILLREAIRKALYDEVDKVENSEFREAILLSKTHRDNFILFLRSVEPLFPRFLSELFSSSFLGIPESIIGLIQNSRTIRRQFRRSLSRTLEESFFNSEIHGISRMTQVPQRIGRVWSCSAERADQLREISWGRKVVGTTVPHPSEMLALIPKSSISCTCGQSGDDSPRISVSVLPSLDQSFFSRGPLKGYLGSSTSMSTQLFHAWEKVTNVHVVKRALSLKESINWFITRDSNLAQTLIRNIVSLTGPFFPLEEAPVFKRTGSALHRFKSARYSEGGYSSICPNLLSHISVSTDTMSDLTQDGTNFDFMFQPLMLYAQTWTSELVQKDLRLRDSTFHWHLRCLKCIRPIDDITLEAPKIFSFPDVSKRISRMVSGAVPQFRKLPEIGLKPGKFDSLKEKDKSRHIGTAQGLLYSILVATHDSGYNDGTIFPVNIYGKVSPRDYLRGLARGVLIGSSICFLTRMTNININRPLELISGVISYILLRLDNHPSLYVMLKEPSLRSEIFSIPQKIPAAYPTTMKEGNRSVLCYLQHVLRYEREAITTSPENDWLWIFSDFRSIKMTYLTLITYQSHLLLQRIDRNLSKQMRVRLRQLNSLMRQVLGGHGEGTLDSDEDIQGLLRDALQRTRWVDQEVRHAAKTMKCDYSPSKRVSRKAGCSEWICSAQQVAVSTSSNPAPISEIDIRALSKKLQNPLISGLRVVQWATGAHYKLKPILNDLEAYPTLCLVVGDGSGGISRAVLSMFPDAKLVFNSLLEVNDLMASGTHPLPPSALMSGGEDIVSRVIDFNSIWEKPSDLRNPSTWRYFQTVQSAANMSYDLIICDAEVTDIPSINKITLLMSDFSLSINGPLSLIFKTYGTMLVNPDYKAVQHLSRAFPSVTGYITQMTSSFSSELYLKFSKRGKFFRDSEYLTSSTLREMSLVLFNCSSSKSEMLRARSLNYQDLVRGFPEEIISNPYNEMIITLIDNDVESFLVHKMVDDLELRQGAFSKMSIILTIMMVFSNRVFNVSKPLNDPKFYPPSDPKILRHFNICCGTLIYLSAALGDVLNFARLHELYNNPVTYYFKKQTLGGRMYLAWSWTDNTPVFKRVACNSSLSLSSHWIRLIYKIVKTTRLVGSAKDLSQEVEKHLKSYNRWINFSDLRSRSSLLDYSCL</sequence>
<organismHost>
    <name type="scientific">Mammalia</name>
    <dbReference type="NCBI Taxonomy" id="40674"/>
</organismHost>
<keyword id="KW-0067">ATP-binding</keyword>
<keyword id="KW-1035">Host cytoplasm</keyword>
<keyword id="KW-0378">Hydrolase</keyword>
<keyword id="KW-0489">Methyltransferase</keyword>
<keyword id="KW-0506">mRNA capping</keyword>
<keyword id="KW-0507">mRNA processing</keyword>
<keyword id="KW-0511">Multifunctional enzyme</keyword>
<keyword id="KW-0547">Nucleotide-binding</keyword>
<keyword id="KW-0548">Nucleotidyltransferase</keyword>
<keyword id="KW-1185">Reference proteome</keyword>
<keyword id="KW-0696">RNA-directed RNA polymerase</keyword>
<keyword id="KW-0949">S-adenosyl-L-methionine</keyword>
<keyword id="KW-0808">Transferase</keyword>
<keyword id="KW-0693">Viral RNA replication</keyword>
<keyword id="KW-0946">Virion</keyword>
<proteinExistence type="inferred from homology"/>
<accession>A4UHQ2</accession>
<name>L_EBLV1</name>
<reference key="1">
    <citation type="journal article" date="2007" name="J. Gen. Virol.">
        <title>Comparative analysis of the full genome sequence of European bat lyssavirus type 1 and type 2 with other lyssaviruses and evidence for a conserved transcription termination and polyadenylation motif in the G-L 3' non-translated region.</title>
        <authorList>
            <person name="Marston D.A."/>
            <person name="McElhinney L.M."/>
            <person name="Johnson N."/>
            <person name="Muller T."/>
            <person name="Conzelmann K.K."/>
            <person name="Tordo N."/>
            <person name="Fooks A.R."/>
        </authorList>
    </citation>
    <scope>NUCLEOTIDE SEQUENCE [GENOMIC RNA]</scope>
</reference>
<feature type="chain" id="PRO_0000297834" description="RNA-directed RNA polymerase L">
    <location>
        <begin position="1"/>
        <end position="2127"/>
    </location>
</feature>
<feature type="domain" description="RdRp catalytic" evidence="3">
    <location>
        <begin position="611"/>
        <end position="799"/>
    </location>
</feature>
<feature type="domain" description="Mononegavirus-type SAM-dependent 2'-O-MTase" evidence="4">
    <location>
        <begin position="1674"/>
        <end position="1871"/>
    </location>
</feature>
<evidence type="ECO:0000250" key="1">
    <source>
        <dbReference type="UniProtKB" id="P03523"/>
    </source>
</evidence>
<evidence type="ECO:0000250" key="2">
    <source>
        <dbReference type="UniProtKB" id="P28887"/>
    </source>
</evidence>
<evidence type="ECO:0000255" key="3">
    <source>
        <dbReference type="PROSITE-ProRule" id="PRU00539"/>
    </source>
</evidence>
<evidence type="ECO:0000255" key="4">
    <source>
        <dbReference type="PROSITE-ProRule" id="PRU00923"/>
    </source>
</evidence>
<evidence type="ECO:0000305" key="5"/>
<organism>
    <name type="scientific">European bat lyssavirus 1 (strain Bat/Germany/RV9/1968)</name>
    <name type="common">EBLV1</name>
    <dbReference type="NCBI Taxonomy" id="453115"/>
    <lineage>
        <taxon>Viruses</taxon>
        <taxon>Riboviria</taxon>
        <taxon>Orthornavirae</taxon>
        <taxon>Negarnaviricota</taxon>
        <taxon>Haploviricotina</taxon>
        <taxon>Monjiviricetes</taxon>
        <taxon>Mononegavirales</taxon>
        <taxon>Rhabdoviridae</taxon>
        <taxon>Alpharhabdovirinae</taxon>
        <taxon>Lyssavirus</taxon>
        <taxon>Lyssavirus hamburg</taxon>
    </lineage>
</organism>
<comment type="function">
    <text evidence="1">RNA-directed RNA polymerase that catalyzes the transcription of viral mRNAs, their capping and polyadenylation. The template is composed of the viral RNA tightly encapsidated by the nucleoprotein (N). The viral polymerase binds to the genomic RNA at the 3' leader promoter, and transcribes subsequently all viral mRNAs with a decreasing efficiency. The first gene is the most transcribed, and the last the least transcribed. The viral phosphoprotein acts as a processivity factor. Capping is concomitant with initiation of mRNA transcription. Indeed, a GDP polyribonucleotidyl transferase (PRNTase) adds the cap structure when the nascent RNA chain length has reached few nucleotides. Ribose 2'-O methylation of viral mRNA cap precedes and facilitates subsequent guanine-N-7 methylation, both activities being carried by the viral polymerase. Polyadenylation of mRNAs occur by a stuttering mechanism at a slipery stop site present at the end viral genes. After finishing transcription of a mRNA, the polymerase can resume transcription of the downstream gene.</text>
</comment>
<comment type="function">
    <text evidence="1">RNA-directed RNA polymerase that catalyzes the replication of viral genomic RNA. The template is composed of the viral RNA tightly encapsidated by the nucleoprotein (N). The replicase mode is dependent on intracellular N protein concentration. In this mode, the polymerase replicates the whole viral genome without recognizing transcriptional signals, and the replicated genome is not caped or polyadenylated.</text>
</comment>
<comment type="catalytic activity">
    <reaction evidence="3">
        <text>RNA(n) + a ribonucleoside 5'-triphosphate = RNA(n+1) + diphosphate</text>
        <dbReference type="Rhea" id="RHEA:21248"/>
        <dbReference type="Rhea" id="RHEA-COMP:14527"/>
        <dbReference type="Rhea" id="RHEA-COMP:17342"/>
        <dbReference type="ChEBI" id="CHEBI:33019"/>
        <dbReference type="ChEBI" id="CHEBI:61557"/>
        <dbReference type="ChEBI" id="CHEBI:140395"/>
        <dbReference type="EC" id="2.7.7.48"/>
    </reaction>
</comment>
<comment type="catalytic activity">
    <reaction evidence="1">
        <text>a 5'-end (5'-triphosphoguanosine)-adenylyl-adenylyl-cytidylyl-adenosine in mRNA + 2 S-adenosyl-L-methionine = a 5'-end (N(7)-methyl 5'-triphosphoguanosine)-(2'-O-methyladenylyl)-adenylyl-cytidylyl-adenosine in mRNA + 2 S-adenosyl-L-homocysteine + H(+)</text>
        <dbReference type="Rhea" id="RHEA:65376"/>
        <dbReference type="Rhea" id="RHEA-COMP:16797"/>
        <dbReference type="Rhea" id="RHEA-COMP:16798"/>
        <dbReference type="ChEBI" id="CHEBI:15378"/>
        <dbReference type="ChEBI" id="CHEBI:57856"/>
        <dbReference type="ChEBI" id="CHEBI:59789"/>
        <dbReference type="ChEBI" id="CHEBI:156483"/>
        <dbReference type="ChEBI" id="CHEBI:156484"/>
        <dbReference type="EC" id="2.1.1.375"/>
    </reaction>
</comment>
<comment type="catalytic activity">
    <reaction evidence="1">
        <text>a 5'-end (5'-triphosphoguanosine)-adenylyl-adenylyl-cytidylyl-adenosine in mRNA + S-adenosyl-L-methionine = a 5'-end (5'-triphosphoguanosine)-(2'-O-methyladenylyl)-adenylyl-cytidylyl-adenosine in mRNA + S-adenosyl-L-homocysteine + H(+)</text>
        <dbReference type="Rhea" id="RHEA:65380"/>
        <dbReference type="Rhea" id="RHEA-COMP:16797"/>
        <dbReference type="Rhea" id="RHEA-COMP:16801"/>
        <dbReference type="ChEBI" id="CHEBI:15378"/>
        <dbReference type="ChEBI" id="CHEBI:57856"/>
        <dbReference type="ChEBI" id="CHEBI:59789"/>
        <dbReference type="ChEBI" id="CHEBI:156482"/>
        <dbReference type="ChEBI" id="CHEBI:156484"/>
    </reaction>
</comment>
<comment type="catalytic activity">
    <reaction evidence="2">
        <text>a 5'-end triphospho-adenylyl-adenylyl-cytidylyl-adenosine in mRNA + GDP + H(+) = a 5'-end (5'-triphosphoguanosine)-adenylyl-adenylyl-cytidylyl-adenosine in mRNA + diphosphate</text>
        <dbReference type="Rhea" id="RHEA:65436"/>
        <dbReference type="Rhea" id="RHEA-COMP:16797"/>
        <dbReference type="Rhea" id="RHEA-COMP:16799"/>
        <dbReference type="ChEBI" id="CHEBI:15378"/>
        <dbReference type="ChEBI" id="CHEBI:33019"/>
        <dbReference type="ChEBI" id="CHEBI:58189"/>
        <dbReference type="ChEBI" id="CHEBI:156484"/>
        <dbReference type="ChEBI" id="CHEBI:156503"/>
        <dbReference type="EC" id="2.7.7.88"/>
    </reaction>
</comment>
<comment type="catalytic activity">
    <reaction evidence="1">
        <text>a 5'-end (5'-triphosphoguanosine)-(2'-O-methyladenylyl)-adenylyl-cytidylyl-adenosine in mRNA + S-adenosyl-L-methionine = a 5'-end (N(7)-methyl 5'-triphosphoguanosine)-(2'-O-methyladenylyl)-adenylyl-cytidylyl-adenosine in mRNA + S-adenosyl-L-homocysteine</text>
        <dbReference type="Rhea" id="RHEA:65440"/>
        <dbReference type="Rhea" id="RHEA-COMP:16798"/>
        <dbReference type="Rhea" id="RHEA-COMP:16801"/>
        <dbReference type="ChEBI" id="CHEBI:57856"/>
        <dbReference type="ChEBI" id="CHEBI:59789"/>
        <dbReference type="ChEBI" id="CHEBI:156482"/>
        <dbReference type="ChEBI" id="CHEBI:156483"/>
    </reaction>
</comment>
<comment type="catalytic activity">
    <reaction evidence="2">
        <text>GTP + H2O = GDP + phosphate + H(+)</text>
        <dbReference type="Rhea" id="RHEA:19669"/>
        <dbReference type="ChEBI" id="CHEBI:15377"/>
        <dbReference type="ChEBI" id="CHEBI:15378"/>
        <dbReference type="ChEBI" id="CHEBI:37565"/>
        <dbReference type="ChEBI" id="CHEBI:43474"/>
        <dbReference type="ChEBI" id="CHEBI:58189"/>
    </reaction>
</comment>
<comment type="subunit">
    <text evidence="1">May form homodimer. Interacts with the P protein.</text>
</comment>
<comment type="subcellular location">
    <subcellularLocation>
        <location evidence="1">Virion</location>
    </subcellularLocation>
    <subcellularLocation>
        <location evidence="1">Host cytoplasm</location>
    </subcellularLocation>
    <text evidence="1">L and P are packaged asymmetrically towards the blunt end of the virus.</text>
</comment>
<comment type="similarity">
    <text evidence="5">Belongs to the rhabdoviridae protein L family.</text>
</comment>
<gene>
    <name type="primary">L</name>
</gene>
<dbReference type="EC" id="2.7.7.48" evidence="2"/>
<dbReference type="EC" id="3.6.1.-" evidence="1"/>
<dbReference type="EC" id="2.7.7.88" evidence="1"/>
<dbReference type="EC" id="2.1.1.375" evidence="1"/>
<dbReference type="EMBL" id="EF157976">
    <property type="protein sequence ID" value="ABO65247.1"/>
    <property type="molecule type" value="Genomic_RNA"/>
</dbReference>
<dbReference type="RefSeq" id="YP_001285392.1">
    <property type="nucleotide sequence ID" value="NC_009527.1"/>
</dbReference>
<dbReference type="SMR" id="A4UHQ2"/>
<dbReference type="GeneID" id="5219906"/>
<dbReference type="KEGG" id="vg:5219906"/>
<dbReference type="Proteomes" id="UP000008926">
    <property type="component" value="Segment"/>
</dbReference>
<dbReference type="GO" id="GO:0030430">
    <property type="term" value="C:host cell cytoplasm"/>
    <property type="evidence" value="ECO:0007669"/>
    <property type="project" value="UniProtKB-SubCell"/>
</dbReference>
<dbReference type="GO" id="GO:0044423">
    <property type="term" value="C:virion component"/>
    <property type="evidence" value="ECO:0007669"/>
    <property type="project" value="UniProtKB-KW"/>
</dbReference>
<dbReference type="GO" id="GO:0005524">
    <property type="term" value="F:ATP binding"/>
    <property type="evidence" value="ECO:0007669"/>
    <property type="project" value="UniProtKB-KW"/>
</dbReference>
<dbReference type="GO" id="GO:0003924">
    <property type="term" value="F:GTPase activity"/>
    <property type="evidence" value="ECO:0007669"/>
    <property type="project" value="RHEA"/>
</dbReference>
<dbReference type="GO" id="GO:0004482">
    <property type="term" value="F:mRNA 5'-cap (guanine-N7-)-methyltransferase activity"/>
    <property type="evidence" value="ECO:0007669"/>
    <property type="project" value="InterPro"/>
</dbReference>
<dbReference type="GO" id="GO:0003968">
    <property type="term" value="F:RNA-directed RNA polymerase activity"/>
    <property type="evidence" value="ECO:0007669"/>
    <property type="project" value="UniProtKB-KW"/>
</dbReference>
<dbReference type="GO" id="GO:0039689">
    <property type="term" value="P:negative stranded viral RNA replication"/>
    <property type="evidence" value="ECO:0000250"/>
    <property type="project" value="UniProtKB"/>
</dbReference>
<dbReference type="InterPro" id="IPR039530">
    <property type="entry name" value="L_methyltransferase_rhabdo"/>
</dbReference>
<dbReference type="InterPro" id="IPR039736">
    <property type="entry name" value="L_poly_C"/>
</dbReference>
<dbReference type="InterPro" id="IPR048398">
    <property type="entry name" value="Methyltrans_Mon_C"/>
</dbReference>
<dbReference type="InterPro" id="IPR048397">
    <property type="entry name" value="Methyltrans_Mon_CD"/>
</dbReference>
<dbReference type="InterPro" id="IPR026890">
    <property type="entry name" value="Mononeg_mRNAcap"/>
</dbReference>
<dbReference type="InterPro" id="IPR014023">
    <property type="entry name" value="Mononeg_RNA_pol_cat"/>
</dbReference>
<dbReference type="InterPro" id="IPR025786">
    <property type="entry name" value="Mononega_L_MeTrfase"/>
</dbReference>
<dbReference type="InterPro" id="IPR017234">
    <property type="entry name" value="RNA-dir_pol_rhabdovirus"/>
</dbReference>
<dbReference type="NCBIfam" id="TIGR04198">
    <property type="entry name" value="paramyx_RNAcap"/>
    <property type="match status" value="1"/>
</dbReference>
<dbReference type="Pfam" id="PF21080">
    <property type="entry name" value="Methyltrans_Mon_1st"/>
    <property type="match status" value="1"/>
</dbReference>
<dbReference type="Pfam" id="PF14314">
    <property type="entry name" value="Methyltrans_Mon_2nd"/>
    <property type="match status" value="1"/>
</dbReference>
<dbReference type="Pfam" id="PF21081">
    <property type="entry name" value="Methyltrans_Mon_3rd"/>
    <property type="match status" value="1"/>
</dbReference>
<dbReference type="Pfam" id="PF14318">
    <property type="entry name" value="Mononeg_mRNAcap"/>
    <property type="match status" value="1"/>
</dbReference>
<dbReference type="Pfam" id="PF00946">
    <property type="entry name" value="Mononeg_RNA_pol"/>
    <property type="match status" value="1"/>
</dbReference>
<dbReference type="PIRSF" id="PIRSF037546">
    <property type="entry name" value="RNA_pol_RhabdoV_sub"/>
    <property type="match status" value="1"/>
</dbReference>
<dbReference type="PROSITE" id="PS50526">
    <property type="entry name" value="RDRP_SSRNA_NEG_NONSEG"/>
    <property type="match status" value="1"/>
</dbReference>
<dbReference type="PROSITE" id="PS51590">
    <property type="entry name" value="SAM_MT_MNV_L"/>
    <property type="match status" value="1"/>
</dbReference>